<reference key="1">
    <citation type="journal article" date="1980" name="Nucleic Acids Res.">
        <title>Complete nucleotide sequence of the haemagglutinin gene from a human influenza virus of the Hong Kong subtype.</title>
        <authorList>
            <person name="Both G.W."/>
            <person name="Sleigh M.J."/>
        </authorList>
    </citation>
    <scope>NUCLEOTIDE SEQUENCE [MRNA]</scope>
    <source>
        <strain>Subtype 29C</strain>
    </source>
</reference>
<reference key="2">
    <citation type="journal article" date="1979" name="Nucleic Acids Res.">
        <title>The influenza virus haemagglutinin gene: cloning and characterisation of a double-stranded DNA copy.</title>
        <authorList>
            <person name="Sleigh M.J."/>
            <person name="Both G.W."/>
            <person name="Brownlee G.G."/>
        </authorList>
    </citation>
    <scope>NUCLEOTIDE SEQUENCE [GENOMIC RNA] OF 237-261</scope>
    <source>
        <strain>Subtype 29C</strain>
    </source>
</reference>
<reference key="3">
    <citation type="journal article" date="1980" name="FEBS Lett.">
        <title>The disulphide bonds of a Hong Kong influenza virus hemagglutinin.</title>
        <authorList>
            <person name="Dopheide T.A."/>
            <person name="Ward C.W."/>
        </authorList>
    </citation>
    <scope>DISULFIDE BONDS</scope>
</reference>
<gene>
    <name evidence="1" type="primary">HA</name>
</gene>
<organism>
    <name type="scientific">Influenza A virus (strain A/Northern Territory/60/1968 H3N2)</name>
    <name type="common">Influenza A virus (strain NT60)</name>
    <name type="synonym">Influenza A virus (strain A/NT/60/1968 H3N2)</name>
    <dbReference type="NCBI Taxonomy" id="384505"/>
    <lineage>
        <taxon>Viruses</taxon>
        <taxon>Riboviria</taxon>
        <taxon>Orthornavirae</taxon>
        <taxon>Negarnaviricota</taxon>
        <taxon>Polyploviricotina</taxon>
        <taxon>Insthoviricetes</taxon>
        <taxon>Articulavirales</taxon>
        <taxon>Orthomyxoviridae</taxon>
        <taxon>Alphainfluenzavirus</taxon>
        <taxon>Alphainfluenzavirus influenzae</taxon>
        <taxon>Influenza A virus</taxon>
    </lineage>
</organism>
<dbReference type="EMBL" id="V01103">
    <property type="protein sequence ID" value="CAA24290.1"/>
    <property type="status" value="ALT_TERM"/>
    <property type="molecule type" value="mRNA"/>
</dbReference>
<dbReference type="EMBL" id="V01103">
    <property type="protein sequence ID" value="CAA24291.1"/>
    <property type="status" value="ALT_INIT"/>
    <property type="molecule type" value="mRNA"/>
</dbReference>
<dbReference type="EMBL" id="M25434">
    <property type="protein sequence ID" value="AAA43163.1"/>
    <property type="molecule type" value="Genomic_RNA"/>
</dbReference>
<dbReference type="PIR" id="A93705">
    <property type="entry name" value="HMIVH"/>
</dbReference>
<dbReference type="PDB" id="5T6N">
    <property type="method" value="X-ray"/>
    <property type="resolution" value="2.54 A"/>
    <property type="chains" value="B/D/F=346-519"/>
</dbReference>
<dbReference type="PDB" id="6BKM">
    <property type="method" value="X-ray"/>
    <property type="resolution" value="2.20 A"/>
    <property type="chains" value="B/D/F=346-519"/>
</dbReference>
<dbReference type="PDB" id="6CEX">
    <property type="method" value="X-ray"/>
    <property type="resolution" value="2.57 A"/>
    <property type="chains" value="B/D/F=346-519"/>
</dbReference>
<dbReference type="PDBsum" id="5T6N"/>
<dbReference type="PDBsum" id="6BKM"/>
<dbReference type="PDBsum" id="6CEX"/>
<dbReference type="BMRB" id="P03436"/>
<dbReference type="SMR" id="P03436"/>
<dbReference type="GlyCosmos" id="P03436">
    <property type="glycosylation" value="7 sites, No reported glycans"/>
</dbReference>
<dbReference type="GO" id="GO:0020002">
    <property type="term" value="C:host cell plasma membrane"/>
    <property type="evidence" value="ECO:0007669"/>
    <property type="project" value="UniProtKB-SubCell"/>
</dbReference>
<dbReference type="GO" id="GO:0016020">
    <property type="term" value="C:membrane"/>
    <property type="evidence" value="ECO:0007669"/>
    <property type="project" value="UniProtKB-UniRule"/>
</dbReference>
<dbReference type="GO" id="GO:0019031">
    <property type="term" value="C:viral envelope"/>
    <property type="evidence" value="ECO:0007669"/>
    <property type="project" value="UniProtKB-UniRule"/>
</dbReference>
<dbReference type="GO" id="GO:0055036">
    <property type="term" value="C:virion membrane"/>
    <property type="evidence" value="ECO:0007669"/>
    <property type="project" value="UniProtKB-SubCell"/>
</dbReference>
<dbReference type="GO" id="GO:0046789">
    <property type="term" value="F:host cell surface receptor binding"/>
    <property type="evidence" value="ECO:0007669"/>
    <property type="project" value="UniProtKB-UniRule"/>
</dbReference>
<dbReference type="GO" id="GO:0075512">
    <property type="term" value="P:clathrin-dependent endocytosis of virus by host cell"/>
    <property type="evidence" value="ECO:0007669"/>
    <property type="project" value="UniProtKB-UniRule"/>
</dbReference>
<dbReference type="GO" id="GO:0039654">
    <property type="term" value="P:fusion of virus membrane with host endosome membrane"/>
    <property type="evidence" value="ECO:0007669"/>
    <property type="project" value="UniProtKB-UniRule"/>
</dbReference>
<dbReference type="GO" id="GO:0019064">
    <property type="term" value="P:fusion of virus membrane with host plasma membrane"/>
    <property type="evidence" value="ECO:0007669"/>
    <property type="project" value="InterPro"/>
</dbReference>
<dbReference type="GO" id="GO:0046761">
    <property type="term" value="P:viral budding from plasma membrane"/>
    <property type="evidence" value="ECO:0007669"/>
    <property type="project" value="UniProtKB-UniRule"/>
</dbReference>
<dbReference type="GO" id="GO:0019062">
    <property type="term" value="P:virion attachment to host cell"/>
    <property type="evidence" value="ECO:0007669"/>
    <property type="project" value="UniProtKB-KW"/>
</dbReference>
<dbReference type="FunFam" id="3.90.20.10:FF:000001">
    <property type="entry name" value="Hemagglutinin"/>
    <property type="match status" value="1"/>
</dbReference>
<dbReference type="FunFam" id="3.90.209.20:FF:000001">
    <property type="entry name" value="Hemagglutinin"/>
    <property type="match status" value="1"/>
</dbReference>
<dbReference type="Gene3D" id="3.90.20.10">
    <property type="match status" value="1"/>
</dbReference>
<dbReference type="Gene3D" id="3.90.209.20">
    <property type="match status" value="1"/>
</dbReference>
<dbReference type="HAMAP" id="MF_04072">
    <property type="entry name" value="INFV_HEMA"/>
    <property type="match status" value="1"/>
</dbReference>
<dbReference type="InterPro" id="IPR008980">
    <property type="entry name" value="Capsid_hemagglutn"/>
</dbReference>
<dbReference type="InterPro" id="IPR013828">
    <property type="entry name" value="Hemagglutn_HA1_a/b_dom_sf"/>
</dbReference>
<dbReference type="InterPro" id="IPR000149">
    <property type="entry name" value="Hemagglutn_influenz_A"/>
</dbReference>
<dbReference type="InterPro" id="IPR001364">
    <property type="entry name" value="Hemagglutn_influenz_A/B"/>
</dbReference>
<dbReference type="Pfam" id="PF00509">
    <property type="entry name" value="Hemagglutinin"/>
    <property type="match status" value="1"/>
</dbReference>
<dbReference type="PRINTS" id="PR00330">
    <property type="entry name" value="HEMAGGLUTN1"/>
</dbReference>
<dbReference type="PRINTS" id="PR00329">
    <property type="entry name" value="HEMAGGLUTN12"/>
</dbReference>
<dbReference type="SUPFAM" id="SSF58064">
    <property type="entry name" value="Influenza hemagglutinin (stalk)"/>
    <property type="match status" value="1"/>
</dbReference>
<dbReference type="SUPFAM" id="SSF49818">
    <property type="entry name" value="Viral protein domain"/>
    <property type="match status" value="1"/>
</dbReference>
<name>HEMA_I68A6</name>
<accession>P03436</accession>
<accession>Q67095</accession>
<accession>Q84107</accession>
<comment type="function">
    <text>Binds to sialic acid-containing receptors on the cell surface, bringing about the attachment of the virus particle to the cell. This attachment induces virion internalization of about two third of the virus particles through clathrin-dependent endocytosis and about one third through a clathrin- and caveolin-independent pathway. Plays a major role in the determination of host range restriction and virulence. Class I viral fusion protein. Responsible for penetration of the virus into the cell cytoplasm by mediating the fusion of the membrane of the endocytosed virus particle with the endosomal membrane. Low pH in endosomes induces an irreversible conformational change in HA2, releasing the fusion hydrophobic peptide. Several trimers are required to form a competent fusion pore.</text>
</comment>
<comment type="function">
    <text evidence="1">Binds to sialic acid-containing receptors on the cell surface, bringing about the attachment of the virus particle to the cell. This attachment induces virion internalization either through clathrin-dependent endocytosis or through clathrin- and caveolin-independent pathway. Plays a major role in the determination of host range restriction and virulence. Class I viral fusion protein. Responsible for penetration of the virus into the cell cytoplasm by mediating the fusion of the membrane of the endocytosed virus particle with the endosomal membrane. Low pH in endosomes induces an irreversible conformational change in HA2, releasing the fusion hydrophobic peptide. Several trimers are required to form a competent fusion pore.</text>
</comment>
<comment type="subunit">
    <text evidence="1 2">Homotrimer of disulfide-linked HA1-HA2.</text>
</comment>
<comment type="subcellular location">
    <subcellularLocation>
        <location evidence="1">Virion membrane</location>
        <topology evidence="1">Single-pass type I membrane protein</topology>
    </subcellularLocation>
    <subcellularLocation>
        <location evidence="1">Host apical cell membrane</location>
        <topology evidence="1">Single-pass type I membrane protein</topology>
    </subcellularLocation>
    <text evidence="1">Targeted to the apical plasma membrane in epithelial polarized cells through a signal present in the transmembrane domain. Associated with glycosphingolipid- and cholesterol-enriched detergent-resistant lipid rafts.</text>
</comment>
<comment type="PTM">
    <text evidence="1">Palmitoylated.</text>
</comment>
<comment type="PTM">
    <text evidence="1">In natural infection, inactive HA is matured into HA1 and HA2 outside the cell by one or more trypsin-like, arginine-specific endoprotease secreted by the bronchial epithelial cells. One identified protease that may be involved in this process is secreted in lungs by club cells.</text>
</comment>
<comment type="miscellaneous">
    <text>Major glycoprotein, comprises over 80% of the envelope proteins present in virus particle.</text>
</comment>
<comment type="miscellaneous">
    <text>The extent of infection into host organism is determined by HA. Influenza viruses bud from the apical surface of polarized epithelial cells (e.g. bronchial epithelial cells) into lumen of lungs and are therefore usually pneumotropic. The reason is that HA is cleaved by tryptase clara which is restricted to lungs. However, HAs of H5 and H7 pantropic avian viruses subtypes can be cleaved by furin and subtilisin-type enzymes, allowing the virus to grow in other organs than lungs.</text>
</comment>
<comment type="miscellaneous">
    <text evidence="3">The influenza A genome consist of 8 RNA segments. Genetic variation of hemagglutinin and/or neuraminidase genes results in the emergence of new influenza strains. The mechanism of variation can be the result of point mutations or the result of genetic reassortment between segments of two different strains.</text>
</comment>
<comment type="similarity">
    <text evidence="1">Belongs to the influenza viruses hemagglutinin family.</text>
</comment>
<comment type="sequence caution" evidence="3">
    <conflict type="erroneous initiation">
        <sequence resource="EMBL-CDS" id="CAA24291"/>
    </conflict>
</comment>
<keyword id="KW-0002">3D-structure</keyword>
<keyword id="KW-1167">Clathrin- and caveolin-independent endocytosis of virus by host</keyword>
<keyword id="KW-1165">Clathrin-mediated endocytosis of virus by host</keyword>
<keyword id="KW-1015">Disulfide bond</keyword>
<keyword id="KW-1170">Fusion of virus membrane with host endosomal membrane</keyword>
<keyword id="KW-1168">Fusion of virus membrane with host membrane</keyword>
<keyword id="KW-0325">Glycoprotein</keyword>
<keyword id="KW-0348">Hemagglutinin</keyword>
<keyword id="KW-1032">Host cell membrane</keyword>
<keyword id="KW-1043">Host membrane</keyword>
<keyword id="KW-0945">Host-virus interaction</keyword>
<keyword id="KW-0449">Lipoprotein</keyword>
<keyword id="KW-0472">Membrane</keyword>
<keyword id="KW-0564">Palmitate</keyword>
<keyword id="KW-0732">Signal</keyword>
<keyword id="KW-0812">Transmembrane</keyword>
<keyword id="KW-1133">Transmembrane helix</keyword>
<keyword id="KW-1161">Viral attachment to host cell</keyword>
<keyword id="KW-0261">Viral envelope protein</keyword>
<keyword id="KW-1162">Viral penetration into host cytoplasm</keyword>
<keyword id="KW-0946">Virion</keyword>
<keyword id="KW-1164">Virus endocytosis by host</keyword>
<keyword id="KW-1160">Virus entry into host cell</keyword>
<evidence type="ECO:0000255" key="1">
    <source>
        <dbReference type="HAMAP-Rule" id="MF_04072"/>
    </source>
</evidence>
<evidence type="ECO:0000269" key="2">
    <source>
    </source>
</evidence>
<evidence type="ECO:0000305" key="3"/>
<evidence type="ECO:0007829" key="4">
    <source>
        <dbReference type="PDB" id="5T6N"/>
    </source>
</evidence>
<evidence type="ECO:0007829" key="5">
    <source>
        <dbReference type="PDB" id="6BKM"/>
    </source>
</evidence>
<organismHost>
    <name type="scientific">Aves</name>
    <dbReference type="NCBI Taxonomy" id="8782"/>
</organismHost>
<organismHost>
    <name type="scientific">Cetacea</name>
    <name type="common">whales</name>
    <dbReference type="NCBI Taxonomy" id="9721"/>
</organismHost>
<organismHost>
    <name type="scientific">Homo sapiens</name>
    <name type="common">Human</name>
    <dbReference type="NCBI Taxonomy" id="9606"/>
</organismHost>
<organismHost>
    <name type="scientific">Phocidae</name>
    <name type="common">true seals</name>
    <dbReference type="NCBI Taxonomy" id="9709"/>
</organismHost>
<organismHost>
    <name type="scientific">Sus scrofa</name>
    <name type="common">Pig</name>
    <dbReference type="NCBI Taxonomy" id="9823"/>
</organismHost>
<sequence>MKTIIALSYIFCLALGQDLPGNDNNTATLCLGHHAVPNGTLVKTITDDQIEVTNATELVQSSSTGKICNNPHRILDGIDCTLIDALLGDPHCDVFQNETWDLFVERSKAFSNCYPYDVPDYASLRSLVASSGTLEFITEGFTWTGVTQNGGSNACKRGPDSGFFSRLNWLTKSGSTYPVLNVTMPNNDNFDKLYIWGVHHPSTNQEQTSLYVQASGRVTVSTRRSQQTIIPNIGSRPWVRGQSSRISIYWTIVKPGDVLVINSNGNLIAPRGYFKMRTGKSSIMRSDAPIDTCISECITPNGSIPNDKPFQNVNKITYGACPKYVKQNTLKLATGMRNVPEKQTRGLFGAIAGFIENGWEGMIDGWYGFRHQNSEGTGQAADLKSTQAAIDQINGKLNRVIEKTNEKFHQIEKEFSEVEGRIQDLEKYVEDTKIDLWSYNAELLVALENQHTIDLTDSEMNKLFEKTRRQLRENAEDMGNGCFKIYHKCDNACIESIRNGTYDHDVYRDEALNNRFQIKGVELKSGYKDWILWISFAISCFLLCVVLLGFIMWACQRGNIRCNICI</sequence>
<proteinExistence type="evidence at protein level"/>
<feature type="signal peptide" evidence="1">
    <location>
        <begin position="1"/>
        <end position="16"/>
    </location>
</feature>
<feature type="chain" id="PRO_0000440417" description="Hemagglutinin" evidence="1">
    <location>
        <begin position="17"/>
        <end position="566"/>
    </location>
</feature>
<feature type="chain" id="PRO_0000039032" description="Hemagglutinin HA1 chain">
    <location>
        <begin position="17"/>
        <end position="344"/>
    </location>
</feature>
<feature type="chain" id="PRO_0000039033" description="Hemagglutinin HA2 chain" evidence="1">
    <location>
        <begin position="346"/>
        <end position="566"/>
    </location>
</feature>
<feature type="topological domain" description="Extracellular" evidence="1">
    <location>
        <begin position="17"/>
        <end position="530"/>
    </location>
</feature>
<feature type="transmembrane region" description="Helical" evidence="1">
    <location>
        <begin position="531"/>
        <end position="551"/>
    </location>
</feature>
<feature type="topological domain" description="Cytoplasmic" evidence="1">
    <location>
        <begin position="552"/>
        <end position="566"/>
    </location>
</feature>
<feature type="site" description="Cleavage; by host" evidence="1">
    <location>
        <begin position="345"/>
        <end position="346"/>
    </location>
</feature>
<feature type="lipid moiety-binding region" description="S-palmitoyl cysteine; by host" evidence="1">
    <location>
        <position position="555"/>
    </location>
</feature>
<feature type="lipid moiety-binding region" description="S-palmitoyl cysteine; by host" evidence="1">
    <location>
        <position position="562"/>
    </location>
</feature>
<feature type="lipid moiety-binding region" description="S-palmitoyl cysteine; by host" evidence="1">
    <location>
        <position position="565"/>
    </location>
</feature>
<feature type="glycosylation site" description="N-linked (GlcNAc...) asparagine; by host" evidence="1">
    <location>
        <position position="24"/>
    </location>
</feature>
<feature type="glycosylation site" description="N-linked (GlcNAc...) asparagine; by host" evidence="1">
    <location>
        <position position="38"/>
    </location>
</feature>
<feature type="glycosylation site" description="N-linked (GlcNAc...) asparagine; by host" evidence="1">
    <location>
        <position position="54"/>
    </location>
</feature>
<feature type="glycosylation site" description="N-linked (GlcNAc...) asparagine; by host" evidence="1">
    <location>
        <position position="97"/>
    </location>
</feature>
<feature type="glycosylation site" description="N-linked (GlcNAc...) asparagine; by host" evidence="1">
    <location>
        <position position="181"/>
    </location>
</feature>
<feature type="glycosylation site" description="N-linked (GlcNAc...) asparagine; by host" evidence="1">
    <location>
        <position position="301"/>
    </location>
</feature>
<feature type="glycosylation site" description="N-linked (GlcNAc...) asparagine; by host" evidence="1">
    <location>
        <position position="499"/>
    </location>
</feature>
<feature type="disulfide bond" description="Interchain (between HA1 and HA2 chains)" evidence="1 2">
    <location>
        <begin position="30"/>
        <end position="482"/>
    </location>
</feature>
<feature type="disulfide bond" evidence="1 2">
    <location>
        <begin position="68"/>
        <end position="293"/>
    </location>
</feature>
<feature type="disulfide bond" evidence="1 2">
    <location>
        <begin position="80"/>
        <end position="92"/>
    </location>
</feature>
<feature type="disulfide bond" evidence="1">
    <location>
        <begin position="113"/>
        <end position="155"/>
    </location>
</feature>
<feature type="disulfide bond" evidence="1 2">
    <location>
        <begin position="297"/>
        <end position="321"/>
    </location>
</feature>
<feature type="disulfide bond" evidence="1">
    <location>
        <begin position="489"/>
        <end position="493"/>
    </location>
</feature>
<feature type="turn" evidence="5">
    <location>
        <begin position="352"/>
        <end position="354"/>
    </location>
</feature>
<feature type="strand" evidence="5">
    <location>
        <begin position="366"/>
        <end position="373"/>
    </location>
</feature>
<feature type="strand" evidence="5">
    <location>
        <begin position="376"/>
        <end position="381"/>
    </location>
</feature>
<feature type="helix" evidence="5">
    <location>
        <begin position="383"/>
        <end position="400"/>
    </location>
</feature>
<feature type="strand" evidence="4">
    <location>
        <begin position="406"/>
        <end position="409"/>
    </location>
</feature>
<feature type="helix" evidence="5">
    <location>
        <begin position="421"/>
        <end position="470"/>
    </location>
</feature>
<feature type="turn" evidence="5">
    <location>
        <begin position="471"/>
        <end position="473"/>
    </location>
</feature>
<feature type="strand" evidence="5">
    <location>
        <begin position="474"/>
        <end position="477"/>
    </location>
</feature>
<feature type="strand" evidence="5">
    <location>
        <begin position="479"/>
        <end position="485"/>
    </location>
</feature>
<feature type="helix" evidence="5">
    <location>
        <begin position="491"/>
        <end position="498"/>
    </location>
</feature>
<feature type="helix" evidence="5">
    <location>
        <begin position="504"/>
        <end position="515"/>
    </location>
</feature>
<protein>
    <recommendedName>
        <fullName evidence="1">Hemagglutinin</fullName>
    </recommendedName>
    <component>
        <recommendedName>
            <fullName evidence="1">Hemagglutinin HA1 chain</fullName>
        </recommendedName>
    </component>
    <component>
        <recommendedName>
            <fullName evidence="1">Hemagglutinin HA2 chain</fullName>
        </recommendedName>
    </component>
</protein>